<evidence type="ECO:0000250" key="1">
    <source>
        <dbReference type="UniProtKB" id="Q96IW7"/>
    </source>
</evidence>
<evidence type="ECO:0000255" key="2"/>
<evidence type="ECO:0000255" key="3">
    <source>
        <dbReference type="PROSITE-ProRule" id="PRU00231"/>
    </source>
</evidence>
<evidence type="ECO:0000269" key="4">
    <source>
    </source>
</evidence>
<evidence type="ECO:0000303" key="5">
    <source>
    </source>
</evidence>
<evidence type="ECO:0000305" key="6"/>
<evidence type="ECO:0000312" key="7">
    <source>
        <dbReference type="EMBL" id="AAB03367.1"/>
    </source>
</evidence>
<reference evidence="6 7" key="1">
    <citation type="journal article" date="1996" name="J. Biol. Chem.">
        <title>Mammalian vesicle trafficking proteins of the endoplasmic reticulum and Golgi apparatus.</title>
        <authorList>
            <person name="Hay J.C."/>
            <person name="Hirling H."/>
            <person name="Scheller R.H."/>
        </authorList>
    </citation>
    <scope>NUCLEOTIDE SEQUENCE [MRNA] (ISOFORM 2)</scope>
    <scope>FUNCTION</scope>
    <scope>SUBCELLULAR LOCATION</scope>
    <source>
        <strain evidence="7">Sprague-Dawley</strain>
        <tissue evidence="4">Liver</tissue>
    </source>
</reference>
<reference key="2">
    <citation type="journal article" date="2004" name="Genome Res.">
        <title>The status, quality, and expansion of the NIH full-length cDNA project: the Mammalian Gene Collection (MGC).</title>
        <authorList>
            <consortium name="The MGC Project Team"/>
        </authorList>
    </citation>
    <scope>NUCLEOTIDE SEQUENCE [LARGE SCALE MRNA] (ISOFORM 1)</scope>
    <source>
        <tissue>Testis</tissue>
    </source>
</reference>
<sequence length="307" mass="34902">MSMILSASVVRVRDGLPLSASTDCEQSAGVQECRKYFKMLSRKLAQFPDRCTLKTGRHNINFISSLGVSYMMLCTENYPNVLAFSFLDELQKEFITTYNMMKTNTAVRPYCFIEFDNFIQRTKQRYNNPRSLSTKINLSDMQMEIKLRPPYQIPMCELGSANGVTSAFSVDCKGAGKISSAHQRLEPATLSGIVAFILSLLCGALNLIRGFHAIESLLQSDGEDFSYMIAFFLGTAACLYQCYLLVYYTSWRNVKSFLTFGLICLCNMYLYELRNLWQLFFHVTVGAFVTLQIWLRQAQGKAPDHDV</sequence>
<protein>
    <recommendedName>
        <fullName>Vesicle-trafficking protein SEC22a</fullName>
    </recommendedName>
    <alternativeName>
        <fullName>SEC22 vesicle-trafficking protein homolog A</fullName>
    </alternativeName>
    <alternativeName>
        <fullName>SEC22 vesicle-trafficking protein-like 2</fullName>
        <shortName>rSec22a</shortName>
    </alternativeName>
</protein>
<accession>Q642F4</accession>
<accession>Q62891</accession>
<dbReference type="EMBL" id="U42209">
    <property type="protein sequence ID" value="AAB03367.1"/>
    <property type="molecule type" value="mRNA"/>
</dbReference>
<dbReference type="EMBL" id="BC081746">
    <property type="protein sequence ID" value="AAH81746.1"/>
    <property type="molecule type" value="mRNA"/>
</dbReference>
<dbReference type="RefSeq" id="NP_476488.2">
    <molecule id="Q642F4-1"/>
    <property type="nucleotide sequence ID" value="NM_057147.2"/>
</dbReference>
<dbReference type="RefSeq" id="XP_006248481.1">
    <property type="nucleotide sequence ID" value="XM_006248419.3"/>
</dbReference>
<dbReference type="RefSeq" id="XP_006248482.1">
    <property type="nucleotide sequence ID" value="XM_006248420.3"/>
</dbReference>
<dbReference type="RefSeq" id="XP_008766915.2">
    <property type="nucleotide sequence ID" value="XM_008768693.2"/>
</dbReference>
<dbReference type="SMR" id="Q642F4"/>
<dbReference type="FunCoup" id="Q642F4">
    <property type="interactions" value="2098"/>
</dbReference>
<dbReference type="STRING" id="10116.ENSRNOP00000061258"/>
<dbReference type="GlyGen" id="Q642F4">
    <property type="glycosylation" value="1 site"/>
</dbReference>
<dbReference type="PhosphoSitePlus" id="Q642F4"/>
<dbReference type="PaxDb" id="10116-ENSRNOP00000061258"/>
<dbReference type="Ensembl" id="ENSRNOT00000063795.3">
    <molecule id="Q642F4-1"/>
    <property type="protein sequence ID" value="ENSRNOP00000061258.2"/>
    <property type="gene ID" value="ENSRNOG00000043069.3"/>
</dbReference>
<dbReference type="GeneID" id="117513"/>
<dbReference type="KEGG" id="rno:117513"/>
<dbReference type="UCSC" id="RGD:621659">
    <molecule id="Q642F4-1"/>
    <property type="organism name" value="rat"/>
</dbReference>
<dbReference type="AGR" id="RGD:621659"/>
<dbReference type="CTD" id="26984"/>
<dbReference type="RGD" id="621659">
    <property type="gene designation" value="Sec22a"/>
</dbReference>
<dbReference type="eggNOG" id="KOG0862">
    <property type="taxonomic scope" value="Eukaryota"/>
</dbReference>
<dbReference type="GeneTree" id="ENSGT00940000158470"/>
<dbReference type="HOGENOM" id="CLU_054453_0_0_1"/>
<dbReference type="InParanoid" id="Q642F4"/>
<dbReference type="OMA" id="NTGMQEC"/>
<dbReference type="OrthoDB" id="1719357at2759"/>
<dbReference type="PhylomeDB" id="Q642F4"/>
<dbReference type="Reactome" id="R-RNO-204005">
    <property type="pathway name" value="COPII-mediated vesicle transport"/>
</dbReference>
<dbReference type="PRO" id="PR:Q642F4"/>
<dbReference type="Proteomes" id="UP000002494">
    <property type="component" value="Chromosome 11"/>
</dbReference>
<dbReference type="Bgee" id="ENSRNOG00000043069">
    <property type="expression patterns" value="Expressed in liver and 19 other cell types or tissues"/>
</dbReference>
<dbReference type="GO" id="GO:0005789">
    <property type="term" value="C:endoplasmic reticulum membrane"/>
    <property type="evidence" value="ECO:0007669"/>
    <property type="project" value="UniProtKB-SubCell"/>
</dbReference>
<dbReference type="GO" id="GO:0006888">
    <property type="term" value="P:endoplasmic reticulum to Golgi vesicle-mediated transport"/>
    <property type="evidence" value="ECO:0000314"/>
    <property type="project" value="RGD"/>
</dbReference>
<dbReference type="GO" id="GO:0015031">
    <property type="term" value="P:protein transport"/>
    <property type="evidence" value="ECO:0007669"/>
    <property type="project" value="UniProtKB-KW"/>
</dbReference>
<dbReference type="CDD" id="cd14824">
    <property type="entry name" value="Longin"/>
    <property type="match status" value="1"/>
</dbReference>
<dbReference type="FunFam" id="3.30.450.50:FF:000010">
    <property type="entry name" value="vesicle-trafficking protein SEC22a isoform X2"/>
    <property type="match status" value="1"/>
</dbReference>
<dbReference type="Gene3D" id="3.30.450.50">
    <property type="entry name" value="Longin domain"/>
    <property type="match status" value="1"/>
</dbReference>
<dbReference type="InterPro" id="IPR011012">
    <property type="entry name" value="Longin-like_dom_sf"/>
</dbReference>
<dbReference type="InterPro" id="IPR010908">
    <property type="entry name" value="Longin_dom"/>
</dbReference>
<dbReference type="InterPro" id="IPR043546">
    <property type="entry name" value="Sec22a/c"/>
</dbReference>
<dbReference type="PANTHER" id="PTHR46258">
    <property type="entry name" value="LONGIN DOMAIN-CONTAINING PROTEIN"/>
    <property type="match status" value="1"/>
</dbReference>
<dbReference type="PANTHER" id="PTHR46258:SF3">
    <property type="entry name" value="VESICLE-TRAFFICKING PROTEIN SEC22A"/>
    <property type="match status" value="1"/>
</dbReference>
<dbReference type="Pfam" id="PF13774">
    <property type="entry name" value="Longin"/>
    <property type="match status" value="1"/>
</dbReference>
<dbReference type="SMART" id="SM01270">
    <property type="entry name" value="Longin"/>
    <property type="match status" value="1"/>
</dbReference>
<dbReference type="SUPFAM" id="SSF64356">
    <property type="entry name" value="SNARE-like"/>
    <property type="match status" value="1"/>
</dbReference>
<dbReference type="PROSITE" id="PS50859">
    <property type="entry name" value="LONGIN"/>
    <property type="match status" value="1"/>
</dbReference>
<feature type="initiator methionine" description="Removed" evidence="1">
    <location>
        <position position="1"/>
    </location>
</feature>
<feature type="chain" id="PRO_0000253046" description="Vesicle-trafficking protein SEC22a">
    <location>
        <begin position="2"/>
        <end position="307"/>
    </location>
</feature>
<feature type="topological domain" description="Cytoplasmic" evidence="2">
    <location>
        <begin position="2"/>
        <end position="187"/>
    </location>
</feature>
<feature type="transmembrane region" description="Helical" evidence="2">
    <location>
        <begin position="188"/>
        <end position="208"/>
    </location>
</feature>
<feature type="topological domain" description="Lumenal" evidence="2">
    <location>
        <begin position="209"/>
        <end position="226"/>
    </location>
</feature>
<feature type="transmembrane region" description="Helical" evidence="2">
    <location>
        <begin position="227"/>
        <end position="247"/>
    </location>
</feature>
<feature type="topological domain" description="Cytoplasmic" evidence="2">
    <location>
        <begin position="248"/>
        <end position="253"/>
    </location>
</feature>
<feature type="transmembrane region" description="Helical" evidence="2">
    <location>
        <begin position="254"/>
        <end position="271"/>
    </location>
</feature>
<feature type="topological domain" description="Lumenal" evidence="2">
    <location>
        <begin position="272"/>
        <end position="274"/>
    </location>
</feature>
<feature type="transmembrane region" description="Helical" evidence="2">
    <location>
        <begin position="275"/>
        <end position="295"/>
    </location>
</feature>
<feature type="topological domain" description="Cytoplasmic" evidence="2">
    <location>
        <begin position="296"/>
        <end position="307"/>
    </location>
</feature>
<feature type="domain" description="Longin" evidence="3">
    <location>
        <begin position="8"/>
        <end position="119"/>
    </location>
</feature>
<feature type="modified residue" description="N-acetylserine" evidence="1">
    <location>
        <position position="2"/>
    </location>
</feature>
<feature type="modified residue" description="Phosphoserine" evidence="1">
    <location>
        <position position="6"/>
    </location>
</feature>
<feature type="modified residue" description="Phosphoserine" evidence="1">
    <location>
        <position position="8"/>
    </location>
</feature>
<feature type="splice variant" id="VSP_020996" description="In isoform 2." evidence="5">
    <original>CYLLVYYTSWRNVKSFLTFGLICLCNMYLYELRNLWQLFFHVTVGAFVTLQIWLRQAQGKAPDHDV</original>
    <variation>MICLCLQGRKERT</variation>
    <location>
        <begin position="242"/>
        <end position="307"/>
    </location>
</feature>
<name>SC22A_RAT</name>
<organism>
    <name type="scientific">Rattus norvegicus</name>
    <name type="common">Rat</name>
    <dbReference type="NCBI Taxonomy" id="10116"/>
    <lineage>
        <taxon>Eukaryota</taxon>
        <taxon>Metazoa</taxon>
        <taxon>Chordata</taxon>
        <taxon>Craniata</taxon>
        <taxon>Vertebrata</taxon>
        <taxon>Euteleostomi</taxon>
        <taxon>Mammalia</taxon>
        <taxon>Eutheria</taxon>
        <taxon>Euarchontoglires</taxon>
        <taxon>Glires</taxon>
        <taxon>Rodentia</taxon>
        <taxon>Myomorpha</taxon>
        <taxon>Muroidea</taxon>
        <taxon>Muridae</taxon>
        <taxon>Murinae</taxon>
        <taxon>Rattus</taxon>
    </lineage>
</organism>
<keyword id="KW-0007">Acetylation</keyword>
<keyword id="KW-0025">Alternative splicing</keyword>
<keyword id="KW-0175">Coiled coil</keyword>
<keyword id="KW-0256">Endoplasmic reticulum</keyword>
<keyword id="KW-0931">ER-Golgi transport</keyword>
<keyword id="KW-0472">Membrane</keyword>
<keyword id="KW-0597">Phosphoprotein</keyword>
<keyword id="KW-0653">Protein transport</keyword>
<keyword id="KW-1185">Reference proteome</keyword>
<keyword id="KW-0812">Transmembrane</keyword>
<keyword id="KW-1133">Transmembrane helix</keyword>
<keyword id="KW-0813">Transport</keyword>
<comment type="function">
    <text evidence="4">May be involved in vesicle transport between the ER and the Golgi complex.</text>
</comment>
<comment type="subcellular location">
    <subcellularLocation>
        <location evidence="4">Endoplasmic reticulum membrane</location>
        <topology evidence="4">Multi-pass membrane protein</topology>
    </subcellularLocation>
</comment>
<comment type="alternative products">
    <event type="alternative splicing"/>
    <isoform>
        <id>Q642F4-1</id>
        <name>1</name>
        <sequence type="displayed"/>
    </isoform>
    <isoform>
        <id>Q642F4-2</id>
        <name evidence="4">2</name>
        <name evidence="4">rsec22a</name>
        <sequence type="described" ref="VSP_020996"/>
    </isoform>
</comment>
<comment type="similarity">
    <text evidence="6">Belongs to the synaptobrevin family.</text>
</comment>
<proteinExistence type="evidence at transcript level"/>
<gene>
    <name type="primary">Sec22a</name>
    <name type="synonym">Sec22l2</name>
</gene>